<reference key="1">
    <citation type="journal article" date="2009" name="PLoS Genet.">
        <title>Organised genome dynamics in the Escherichia coli species results in highly diverse adaptive paths.</title>
        <authorList>
            <person name="Touchon M."/>
            <person name="Hoede C."/>
            <person name="Tenaillon O."/>
            <person name="Barbe V."/>
            <person name="Baeriswyl S."/>
            <person name="Bidet P."/>
            <person name="Bingen E."/>
            <person name="Bonacorsi S."/>
            <person name="Bouchier C."/>
            <person name="Bouvet O."/>
            <person name="Calteau A."/>
            <person name="Chiapello H."/>
            <person name="Clermont O."/>
            <person name="Cruveiller S."/>
            <person name="Danchin A."/>
            <person name="Diard M."/>
            <person name="Dossat C."/>
            <person name="Karoui M.E."/>
            <person name="Frapy E."/>
            <person name="Garry L."/>
            <person name="Ghigo J.M."/>
            <person name="Gilles A.M."/>
            <person name="Johnson J."/>
            <person name="Le Bouguenec C."/>
            <person name="Lescat M."/>
            <person name="Mangenot S."/>
            <person name="Martinez-Jehanne V."/>
            <person name="Matic I."/>
            <person name="Nassif X."/>
            <person name="Oztas S."/>
            <person name="Petit M.A."/>
            <person name="Pichon C."/>
            <person name="Rouy Z."/>
            <person name="Ruf C.S."/>
            <person name="Schneider D."/>
            <person name="Tourret J."/>
            <person name="Vacherie B."/>
            <person name="Vallenet D."/>
            <person name="Medigue C."/>
            <person name="Rocha E.P.C."/>
            <person name="Denamur E."/>
        </authorList>
    </citation>
    <scope>NUCLEOTIDE SEQUENCE [LARGE SCALE GENOMIC DNA]</scope>
    <source>
        <strain>S88 / ExPEC</strain>
    </source>
</reference>
<feature type="chain" id="PRO_0000386881" description="Ribosomal RNA small subunit methyltransferase H">
    <location>
        <begin position="1"/>
        <end position="313"/>
    </location>
</feature>
<feature type="binding site" evidence="1">
    <location>
        <begin position="35"/>
        <end position="37"/>
    </location>
    <ligand>
        <name>S-adenosyl-L-methionine</name>
        <dbReference type="ChEBI" id="CHEBI:59789"/>
    </ligand>
</feature>
<feature type="binding site" evidence="1">
    <location>
        <position position="55"/>
    </location>
    <ligand>
        <name>S-adenosyl-L-methionine</name>
        <dbReference type="ChEBI" id="CHEBI:59789"/>
    </ligand>
</feature>
<feature type="binding site" evidence="1">
    <location>
        <position position="79"/>
    </location>
    <ligand>
        <name>S-adenosyl-L-methionine</name>
        <dbReference type="ChEBI" id="CHEBI:59789"/>
    </ligand>
</feature>
<feature type="binding site" evidence="1">
    <location>
        <position position="101"/>
    </location>
    <ligand>
        <name>S-adenosyl-L-methionine</name>
        <dbReference type="ChEBI" id="CHEBI:59789"/>
    </ligand>
</feature>
<feature type="binding site" evidence="1">
    <location>
        <position position="108"/>
    </location>
    <ligand>
        <name>S-adenosyl-L-methionine</name>
        <dbReference type="ChEBI" id="CHEBI:59789"/>
    </ligand>
</feature>
<keyword id="KW-0963">Cytoplasm</keyword>
<keyword id="KW-0489">Methyltransferase</keyword>
<keyword id="KW-1185">Reference proteome</keyword>
<keyword id="KW-0698">rRNA processing</keyword>
<keyword id="KW-0949">S-adenosyl-L-methionine</keyword>
<keyword id="KW-0808">Transferase</keyword>
<gene>
    <name evidence="1" type="primary">rsmH</name>
    <name type="synonym">mraW</name>
    <name type="ordered locus">ECS88_0085</name>
</gene>
<proteinExistence type="inferred from homology"/>
<sequence>MMENYKHTTVLLDEAVNGLNIRPDGIYIDGTFGRGGHSRLILSQLGEEGRLLAIDRDPQAIAVAKTIDDPRFSIIHGPFSALGEYVAERDLIGKIDGILLDLGVSSPQLDDAERGFSFMRDGPLDMRMDPTRGQSAAEWLQTAEEADIAWVLKTYGEERFAKRIARAIVERNREQPMTRTKELAEVVAAATPVKDKFKHPATRTFQAVRIWVNSELEEIEQALKSSLNVLAPGGRLSIISFHSLEDRIVKRFMRENSRGPQVPAGLPMTEEQLKKLGGRQLRALGKLMPGEEEVAENPRARSSVLRIAERTNA</sequence>
<evidence type="ECO:0000255" key="1">
    <source>
        <dbReference type="HAMAP-Rule" id="MF_01007"/>
    </source>
</evidence>
<dbReference type="EC" id="2.1.1.199" evidence="1"/>
<dbReference type="EMBL" id="CU928161">
    <property type="protein sequence ID" value="CAR01451.1"/>
    <property type="molecule type" value="Genomic_DNA"/>
</dbReference>
<dbReference type="RefSeq" id="WP_000970479.1">
    <property type="nucleotide sequence ID" value="NC_011742.1"/>
</dbReference>
<dbReference type="SMR" id="B7MAK5"/>
<dbReference type="GeneID" id="86862592"/>
<dbReference type="KEGG" id="ecz:ECS88_0085"/>
<dbReference type="HOGENOM" id="CLU_038422_2_0_6"/>
<dbReference type="Proteomes" id="UP000000747">
    <property type="component" value="Chromosome"/>
</dbReference>
<dbReference type="GO" id="GO:0005737">
    <property type="term" value="C:cytoplasm"/>
    <property type="evidence" value="ECO:0007669"/>
    <property type="project" value="UniProtKB-SubCell"/>
</dbReference>
<dbReference type="GO" id="GO:0071424">
    <property type="term" value="F:rRNA (cytosine-N4-)-methyltransferase activity"/>
    <property type="evidence" value="ECO:0007669"/>
    <property type="project" value="UniProtKB-UniRule"/>
</dbReference>
<dbReference type="GO" id="GO:0070475">
    <property type="term" value="P:rRNA base methylation"/>
    <property type="evidence" value="ECO:0007669"/>
    <property type="project" value="UniProtKB-UniRule"/>
</dbReference>
<dbReference type="FunFam" id="1.10.150.170:FF:000001">
    <property type="entry name" value="Ribosomal RNA small subunit methyltransferase H"/>
    <property type="match status" value="1"/>
</dbReference>
<dbReference type="Gene3D" id="1.10.150.170">
    <property type="entry name" value="Putative methyltransferase TM0872, insert domain"/>
    <property type="match status" value="1"/>
</dbReference>
<dbReference type="Gene3D" id="3.40.50.150">
    <property type="entry name" value="Vaccinia Virus protein VP39"/>
    <property type="match status" value="1"/>
</dbReference>
<dbReference type="HAMAP" id="MF_01007">
    <property type="entry name" value="16SrRNA_methyltr_H"/>
    <property type="match status" value="1"/>
</dbReference>
<dbReference type="InterPro" id="IPR002903">
    <property type="entry name" value="RsmH"/>
</dbReference>
<dbReference type="InterPro" id="IPR023397">
    <property type="entry name" value="SAM-dep_MeTrfase_MraW_recog"/>
</dbReference>
<dbReference type="InterPro" id="IPR029063">
    <property type="entry name" value="SAM-dependent_MTases_sf"/>
</dbReference>
<dbReference type="NCBIfam" id="TIGR00006">
    <property type="entry name" value="16S rRNA (cytosine(1402)-N(4))-methyltransferase RsmH"/>
    <property type="match status" value="1"/>
</dbReference>
<dbReference type="PANTHER" id="PTHR11265:SF0">
    <property type="entry name" value="12S RRNA N4-METHYLCYTIDINE METHYLTRANSFERASE"/>
    <property type="match status" value="1"/>
</dbReference>
<dbReference type="PANTHER" id="PTHR11265">
    <property type="entry name" value="S-ADENOSYL-METHYLTRANSFERASE MRAW"/>
    <property type="match status" value="1"/>
</dbReference>
<dbReference type="Pfam" id="PF01795">
    <property type="entry name" value="Methyltransf_5"/>
    <property type="match status" value="1"/>
</dbReference>
<dbReference type="PIRSF" id="PIRSF004486">
    <property type="entry name" value="MraW"/>
    <property type="match status" value="1"/>
</dbReference>
<dbReference type="SUPFAM" id="SSF81799">
    <property type="entry name" value="Putative methyltransferase TM0872, insert domain"/>
    <property type="match status" value="1"/>
</dbReference>
<dbReference type="SUPFAM" id="SSF53335">
    <property type="entry name" value="S-adenosyl-L-methionine-dependent methyltransferases"/>
    <property type="match status" value="1"/>
</dbReference>
<organism>
    <name type="scientific">Escherichia coli O45:K1 (strain S88 / ExPEC)</name>
    <dbReference type="NCBI Taxonomy" id="585035"/>
    <lineage>
        <taxon>Bacteria</taxon>
        <taxon>Pseudomonadati</taxon>
        <taxon>Pseudomonadota</taxon>
        <taxon>Gammaproteobacteria</taxon>
        <taxon>Enterobacterales</taxon>
        <taxon>Enterobacteriaceae</taxon>
        <taxon>Escherichia</taxon>
    </lineage>
</organism>
<comment type="function">
    <text evidence="1">Specifically methylates the N4 position of cytidine in position 1402 (C1402) of 16S rRNA.</text>
</comment>
<comment type="catalytic activity">
    <reaction evidence="1">
        <text>cytidine(1402) in 16S rRNA + S-adenosyl-L-methionine = N(4)-methylcytidine(1402) in 16S rRNA + S-adenosyl-L-homocysteine + H(+)</text>
        <dbReference type="Rhea" id="RHEA:42928"/>
        <dbReference type="Rhea" id="RHEA-COMP:10286"/>
        <dbReference type="Rhea" id="RHEA-COMP:10287"/>
        <dbReference type="ChEBI" id="CHEBI:15378"/>
        <dbReference type="ChEBI" id="CHEBI:57856"/>
        <dbReference type="ChEBI" id="CHEBI:59789"/>
        <dbReference type="ChEBI" id="CHEBI:74506"/>
        <dbReference type="ChEBI" id="CHEBI:82748"/>
        <dbReference type="EC" id="2.1.1.199"/>
    </reaction>
</comment>
<comment type="subcellular location">
    <subcellularLocation>
        <location evidence="1">Cytoplasm</location>
    </subcellularLocation>
</comment>
<comment type="similarity">
    <text evidence="1">Belongs to the methyltransferase superfamily. RsmH family.</text>
</comment>
<accession>B7MAK5</accession>
<name>RSMH_ECO45</name>
<protein>
    <recommendedName>
        <fullName evidence="1">Ribosomal RNA small subunit methyltransferase H</fullName>
        <ecNumber evidence="1">2.1.1.199</ecNumber>
    </recommendedName>
    <alternativeName>
        <fullName evidence="1">16S rRNA m(4)C1402 methyltransferase</fullName>
    </alternativeName>
    <alternativeName>
        <fullName evidence="1">rRNA (cytosine-N(4)-)-methyltransferase RsmH</fullName>
    </alternativeName>
</protein>